<gene>
    <name type="primary">ZNF451</name>
    <name evidence="12" type="synonym">COASTER</name>
    <name type="synonym">KIAA0576</name>
    <name type="synonym">KIAA1702</name>
</gene>
<proteinExistence type="evidence at protein level"/>
<comment type="function">
    <text evidence="1 4 5 6 7">E3 SUMO-protein ligase; has a preference for SUMO2 and SUMO3 and facilitates UBE2I/UBC9-mediated sumoylation of target proteins (PubMed:26524493, PubMed:26524494). Plays a role in protein SUMO2 modification in response to stress caused by DNA damage and by proteasome inhibitors (in vitro). Required for MCM4 sumoylation (By similarity). Has no activity with SUMO1 (PubMed:26524493). Preferentially transfers an additional SUMO2 chain onto the SUMO2 consensus site 'Lys-11' (PubMed:26524493). Negatively regulates transcriptional activation mediated by the SMAD4 complex in response to TGF-beta signaling. Inhibits EP300-mediated acetylation of histone H3 at 'Lys-9' (PubMed:24324267). Plays a role in regulating the transcription of AR targets (PubMed:18656483).</text>
</comment>
<comment type="pathway">
    <text evidence="6 7">Protein modification; protein sumoylation.</text>
</comment>
<comment type="subunit">
    <text evidence="4 5 6 7 8">Homooligomer. Interacts (via N-terminal region) with SUMO1 (PubMed:18656483). Interacts (via N-terminal region) with SUMO2 (PubMed:18656483, PubMed:26524494). Interacts simultaneously with two SUMO2 chains (PubMed:26524493, PubMed:26524494). Identified in a complex with SUMO2 and UBE2I/UBC9, where one ZNF451 interacts with one UBE2I/UBC9 and two SUMO2 chains, one bound to the UBE2I/UBC9 active site and the other to another region of the same UBE2I/UBC9 molecule (PubMed:26524493, PubMed:26524494). Interacts (via C-terminus) with ubiquitin (PubMed:18656483). Interacts (via N-terminal zinc-finger domains) with SMAD4 (via MH2 domain). Interacts with SMAD2 and SMAD3. Identified in a complex that contains at least ZNF451, SMAD2, SMAD3 and SMAD4. Interacts with EP300. Inhibits interaction between EP300 and the SMAD4 complex (PubMed:24324267). Interacts with SIMC1 (PubMed:36373674).</text>
</comment>
<comment type="interaction">
    <interactant intactId="EBI-747230">
        <id>Q9Y4E5</id>
    </interactant>
    <interactant intactId="EBI-80168">
        <id>P63279</id>
        <label>UBE2I</label>
    </interactant>
    <organismsDiffer>false</organismsDiffer>
    <experiments>4</experiments>
</comment>
<comment type="subcellular location">
    <subcellularLocation>
        <location evidence="4 5">Nucleus</location>
    </subcellularLocation>
    <subcellularLocation>
        <location evidence="4 8">Nucleus</location>
        <location evidence="4 8">PML body</location>
    </subcellularLocation>
    <subcellularLocation>
        <location>Nucleus</location>
        <location>Nucleoplasm</location>
    </subcellularLocation>
    <text evidence="4">Colocalizes with UBE2I/UBC9, SUMO1 and SUMO2 in nuclear granules; this probably requires sumoylation. Desumoylation leads to diffuse nucleoplasmic location.</text>
</comment>
<comment type="alternative products">
    <event type="alternative splicing"/>
    <isoform>
        <id>Q9Y4E5-1</id>
        <name>1</name>
        <sequence type="displayed"/>
    </isoform>
    <isoform>
        <id>Q9Y4E5-2</id>
        <name>2</name>
        <sequence type="described" ref="VSP_008624"/>
    </isoform>
    <isoform>
        <id>Q9Y4E5-4</id>
        <name>3</name>
        <sequence type="described" ref="VSP_035312"/>
    </isoform>
</comment>
<comment type="domain">
    <text evidence="7 14">Binds UBE2I/UBC9 and two SUMO2 molecules via its N-terminus. The most N-terminal region interacts with the SUMO2 chain that is covalently bound to the UBE2I/UBC9 active site, while the second region interacts with another SUMO2 that is non-covalently associated with the same UBE2I/UBC9 chain.</text>
</comment>
<comment type="PTM">
    <text evidence="4 6 7">Sumoylated. Predominantly sumoylated on the N-terminal region that is important for interaction with SUMO1 and SUMO2 (PubMed:18656483, PubMed:26524493, PubMed:26524494). Sumoylation is important for localization in nuclear granules; desumoylation leads to diffuse nucleoplasmic location (PubMed:18656483). Autosumoylated (in vitro) (PubMed:26524493, PubMed:26524494). Sumoylation enhances E3 SUMO-protein ligase activity (PubMed:26524494).</text>
</comment>
<comment type="similarity">
    <text evidence="13">Belongs to the krueppel C2H2-type zinc-finger protein family.</text>
</comment>
<comment type="sequence caution" evidence="13">
    <conflict type="miscellaneous discrepancy">
        <sequence resource="EMBL-CDS" id="AAH21712"/>
    </conflict>
    <text>Intron retention.</text>
</comment>
<comment type="sequence caution" evidence="13">
    <conflict type="miscellaneous discrepancy">
        <sequence resource="EMBL-CDS" id="AAH42450"/>
    </conflict>
    <text>Contaminating sequence.</text>
</comment>
<comment type="sequence caution" evidence="13">
    <conflict type="miscellaneous discrepancy">
        <sequence resource="EMBL-CDS" id="AAH58853"/>
    </conflict>
    <text>Contaminating sequence.</text>
</comment>
<comment type="sequence caution" evidence="13">
    <conflict type="erroneous initiation">
        <sequence resource="EMBL-CDS" id="BAA25502"/>
    </conflict>
</comment>
<comment type="sequence caution" evidence="13">
    <conflict type="erroneous initiation">
        <sequence resource="EMBL-CDS" id="BAB21793"/>
    </conflict>
</comment>
<protein>
    <recommendedName>
        <fullName evidence="11">E3 SUMO-protein ligase ZNF451</fullName>
        <ecNumber evidence="6 7">2.3.2.-</ecNumber>
    </recommendedName>
    <alternativeName>
        <fullName evidence="12">Coactivator for steroid receptors</fullName>
    </alternativeName>
    <alternativeName>
        <fullName evidence="13">E3 SUMO-protein transferase ZNF451</fullName>
    </alternativeName>
    <alternativeName>
        <fullName>Zinc finger protein 451</fullName>
    </alternativeName>
</protein>
<dbReference type="EC" id="2.3.2.-" evidence="6 7"/>
<dbReference type="EMBL" id="AY055204">
    <property type="protein sequence ID" value="AAL17975.1"/>
    <property type="molecule type" value="mRNA"/>
</dbReference>
<dbReference type="EMBL" id="AB011148">
    <property type="protein sequence ID" value="BAA25502.1"/>
    <property type="status" value="ALT_INIT"/>
    <property type="molecule type" value="mRNA"/>
</dbReference>
<dbReference type="EMBL" id="AB051489">
    <property type="protein sequence ID" value="BAB21793.1"/>
    <property type="status" value="ALT_INIT"/>
    <property type="molecule type" value="mRNA"/>
</dbReference>
<dbReference type="EMBL" id="AL136311">
    <property type="status" value="NOT_ANNOTATED_CDS"/>
    <property type="molecule type" value="Genomic_DNA"/>
</dbReference>
<dbReference type="EMBL" id="AL450489">
    <property type="status" value="NOT_ANNOTATED_CDS"/>
    <property type="molecule type" value="Genomic_DNA"/>
</dbReference>
<dbReference type="EMBL" id="BC021712">
    <property type="protein sequence ID" value="AAH21712.2"/>
    <property type="status" value="ALT_SEQ"/>
    <property type="molecule type" value="mRNA"/>
</dbReference>
<dbReference type="EMBL" id="BC042450">
    <property type="protein sequence ID" value="AAH42450.1"/>
    <property type="status" value="ALT_SEQ"/>
    <property type="molecule type" value="mRNA"/>
</dbReference>
<dbReference type="EMBL" id="BC058853">
    <property type="protein sequence ID" value="AAH58853.1"/>
    <property type="status" value="ALT_SEQ"/>
    <property type="molecule type" value="mRNA"/>
</dbReference>
<dbReference type="CCDS" id="CCDS43477.1">
    <molecule id="Q9Y4E5-1"/>
</dbReference>
<dbReference type="CCDS" id="CCDS4960.1">
    <molecule id="Q9Y4E5-2"/>
</dbReference>
<dbReference type="CCDS" id="CCDS59026.1">
    <molecule id="Q9Y4E5-4"/>
</dbReference>
<dbReference type="PIR" id="T00341">
    <property type="entry name" value="T00341"/>
</dbReference>
<dbReference type="RefSeq" id="NP_001026794.1">
    <molecule id="Q9Y4E5-1"/>
    <property type="nucleotide sequence ID" value="NM_001031623.3"/>
</dbReference>
<dbReference type="RefSeq" id="NP_001244202.1">
    <molecule id="Q9Y4E5-4"/>
    <property type="nucleotide sequence ID" value="NM_001257273.2"/>
</dbReference>
<dbReference type="RefSeq" id="NP_056370.2">
    <molecule id="Q9Y4E5-2"/>
    <property type="nucleotide sequence ID" value="NM_015555.3"/>
</dbReference>
<dbReference type="PDB" id="5D2M">
    <property type="method" value="X-ray"/>
    <property type="resolution" value="2.40 A"/>
    <property type="chains" value="G=2-56"/>
</dbReference>
<dbReference type="PDBsum" id="5D2M"/>
<dbReference type="SMR" id="Q9Y4E5"/>
<dbReference type="BioGRID" id="117502">
    <property type="interactions" value="85"/>
</dbReference>
<dbReference type="DIP" id="DIP-51264N"/>
<dbReference type="ELM" id="Q9Y4E5"/>
<dbReference type="FunCoup" id="Q9Y4E5">
    <property type="interactions" value="3135"/>
</dbReference>
<dbReference type="IntAct" id="Q9Y4E5">
    <property type="interactions" value="56"/>
</dbReference>
<dbReference type="MINT" id="Q9Y4E5"/>
<dbReference type="STRING" id="9606.ENSP00000359740"/>
<dbReference type="GlyGen" id="Q9Y4E5">
    <property type="glycosylation" value="1 site, 1 O-linked glycan (1 site)"/>
</dbReference>
<dbReference type="iPTMnet" id="Q9Y4E5"/>
<dbReference type="PhosphoSitePlus" id="Q9Y4E5"/>
<dbReference type="BioMuta" id="ZNF451"/>
<dbReference type="DMDM" id="37999825"/>
<dbReference type="jPOST" id="Q9Y4E5"/>
<dbReference type="MassIVE" id="Q9Y4E5"/>
<dbReference type="PaxDb" id="9606-ENSP00000359740"/>
<dbReference type="PeptideAtlas" id="Q9Y4E5"/>
<dbReference type="ProteomicsDB" id="86178">
    <molecule id="Q9Y4E5-1"/>
</dbReference>
<dbReference type="ProteomicsDB" id="86179">
    <molecule id="Q9Y4E5-2"/>
</dbReference>
<dbReference type="ProteomicsDB" id="86180">
    <molecule id="Q9Y4E5-4"/>
</dbReference>
<dbReference type="Pumba" id="Q9Y4E5"/>
<dbReference type="Antibodypedia" id="2845">
    <property type="antibodies" value="87 antibodies from 21 providers"/>
</dbReference>
<dbReference type="DNASU" id="26036"/>
<dbReference type="Ensembl" id="ENST00000357489.7">
    <molecule id="Q9Y4E5-2"/>
    <property type="protein sequence ID" value="ENSP00000350083.3"/>
    <property type="gene ID" value="ENSG00000112200.17"/>
</dbReference>
<dbReference type="Ensembl" id="ENST00000370706.9">
    <molecule id="Q9Y4E5-1"/>
    <property type="protein sequence ID" value="ENSP00000359740.4"/>
    <property type="gene ID" value="ENSG00000112200.17"/>
</dbReference>
<dbReference type="Ensembl" id="ENST00000370708.8">
    <molecule id="Q9Y4E5-4"/>
    <property type="protein sequence ID" value="ENSP00000359742.4"/>
    <property type="gene ID" value="ENSG00000112200.17"/>
</dbReference>
<dbReference type="GeneID" id="26036"/>
<dbReference type="KEGG" id="hsa:26036"/>
<dbReference type="MANE-Select" id="ENST00000370706.9">
    <property type="protein sequence ID" value="ENSP00000359740.4"/>
    <property type="RefSeq nucleotide sequence ID" value="NM_001031623.3"/>
    <property type="RefSeq protein sequence ID" value="NP_001026794.1"/>
</dbReference>
<dbReference type="UCSC" id="uc003pdm.3">
    <molecule id="Q9Y4E5-1"/>
    <property type="organism name" value="human"/>
</dbReference>
<dbReference type="AGR" id="HGNC:21091"/>
<dbReference type="CTD" id="26036"/>
<dbReference type="DisGeNET" id="26036"/>
<dbReference type="GeneCards" id="ZNF451"/>
<dbReference type="HGNC" id="HGNC:21091">
    <property type="gene designation" value="ZNF451"/>
</dbReference>
<dbReference type="HPA" id="ENSG00000112200">
    <property type="expression patterns" value="Tissue enhanced (bone)"/>
</dbReference>
<dbReference type="MIM" id="615708">
    <property type="type" value="gene"/>
</dbReference>
<dbReference type="neXtProt" id="NX_Q9Y4E5"/>
<dbReference type="OpenTargets" id="ENSG00000112200"/>
<dbReference type="PharmGKB" id="PA134967635"/>
<dbReference type="VEuPathDB" id="HostDB:ENSG00000112200"/>
<dbReference type="eggNOG" id="KOG1721">
    <property type="taxonomic scope" value="Eukaryota"/>
</dbReference>
<dbReference type="GeneTree" id="ENSGT00390000011354"/>
<dbReference type="HOGENOM" id="CLU_010658_0_0_1"/>
<dbReference type="InParanoid" id="Q9Y4E5"/>
<dbReference type="OMA" id="RCSLCHQ"/>
<dbReference type="OrthoDB" id="6091938at2759"/>
<dbReference type="PAN-GO" id="Q9Y4E5">
    <property type="GO annotations" value="6 GO annotations based on evolutionary models"/>
</dbReference>
<dbReference type="PhylomeDB" id="Q9Y4E5"/>
<dbReference type="TreeFam" id="TF331947"/>
<dbReference type="PathwayCommons" id="Q9Y4E5"/>
<dbReference type="SignaLink" id="Q9Y4E5"/>
<dbReference type="UniPathway" id="UPA00886"/>
<dbReference type="BioGRID-ORCS" id="26036">
    <property type="hits" value="15 hits in 1161 CRISPR screens"/>
</dbReference>
<dbReference type="CD-CODE" id="B5B9A610">
    <property type="entry name" value="PML body"/>
</dbReference>
<dbReference type="ChiTaRS" id="ZNF451">
    <property type="organism name" value="human"/>
</dbReference>
<dbReference type="GeneWiki" id="ZNF451"/>
<dbReference type="GenomeRNAi" id="26036"/>
<dbReference type="Pharos" id="Q9Y4E5">
    <property type="development level" value="Tbio"/>
</dbReference>
<dbReference type="PRO" id="PR:Q9Y4E5"/>
<dbReference type="Proteomes" id="UP000005640">
    <property type="component" value="Chromosome 6"/>
</dbReference>
<dbReference type="RNAct" id="Q9Y4E5">
    <property type="molecule type" value="protein"/>
</dbReference>
<dbReference type="Bgee" id="ENSG00000112200">
    <property type="expression patterns" value="Expressed in corpus callosum and 210 other cell types or tissues"/>
</dbReference>
<dbReference type="ExpressionAtlas" id="Q9Y4E5">
    <property type="expression patterns" value="baseline and differential"/>
</dbReference>
<dbReference type="GO" id="GO:0005634">
    <property type="term" value="C:nucleus"/>
    <property type="evidence" value="ECO:0000314"/>
    <property type="project" value="UniProtKB"/>
</dbReference>
<dbReference type="GO" id="GO:0016605">
    <property type="term" value="C:PML body"/>
    <property type="evidence" value="ECO:0000314"/>
    <property type="project" value="UniProtKB"/>
</dbReference>
<dbReference type="GO" id="GO:0000981">
    <property type="term" value="F:DNA-binding transcription factor activity, RNA polymerase II-specific"/>
    <property type="evidence" value="ECO:0000318"/>
    <property type="project" value="GO_Central"/>
</dbReference>
<dbReference type="GO" id="GO:0043565">
    <property type="term" value="F:sequence-specific DNA binding"/>
    <property type="evidence" value="ECO:0000318"/>
    <property type="project" value="GO_Central"/>
</dbReference>
<dbReference type="GO" id="GO:0061665">
    <property type="term" value="F:SUMO ligase activity"/>
    <property type="evidence" value="ECO:0000314"/>
    <property type="project" value="UniProtKB"/>
</dbReference>
<dbReference type="GO" id="GO:0003714">
    <property type="term" value="F:transcription corepressor activity"/>
    <property type="evidence" value="ECO:0000315"/>
    <property type="project" value="UniProtKB"/>
</dbReference>
<dbReference type="GO" id="GO:0140416">
    <property type="term" value="F:transcription regulator inhibitor activity"/>
    <property type="evidence" value="ECO:0000314"/>
    <property type="project" value="GO_Central"/>
</dbReference>
<dbReference type="GO" id="GO:0008270">
    <property type="term" value="F:zinc ion binding"/>
    <property type="evidence" value="ECO:0007669"/>
    <property type="project" value="UniProtKB-KW"/>
</dbReference>
<dbReference type="GO" id="GO:0060633">
    <property type="term" value="P:negative regulation of transcription initiation by RNA polymerase II"/>
    <property type="evidence" value="ECO:0000315"/>
    <property type="project" value="UniProtKB"/>
</dbReference>
<dbReference type="GO" id="GO:0030512">
    <property type="term" value="P:negative regulation of transforming growth factor beta receptor signaling pathway"/>
    <property type="evidence" value="ECO:0000315"/>
    <property type="project" value="UniProtKB"/>
</dbReference>
<dbReference type="GO" id="GO:0016925">
    <property type="term" value="P:protein sumoylation"/>
    <property type="evidence" value="ECO:0000314"/>
    <property type="project" value="UniProtKB"/>
</dbReference>
<dbReference type="CDD" id="cd18721">
    <property type="entry name" value="PIN_ZNF451-like"/>
    <property type="match status" value="1"/>
</dbReference>
<dbReference type="FunFam" id="3.30.160.60:FF:000836">
    <property type="entry name" value="E3 SUMO-protein ligase ZNF451 isoform X1"/>
    <property type="match status" value="1"/>
</dbReference>
<dbReference type="Gene3D" id="3.30.160.60">
    <property type="entry name" value="Classic Zinc Finger"/>
    <property type="match status" value="3"/>
</dbReference>
<dbReference type="InterPro" id="IPR041192">
    <property type="entry name" value="PIN_11"/>
</dbReference>
<dbReference type="InterPro" id="IPR013087">
    <property type="entry name" value="Znf_C2H2_type"/>
</dbReference>
<dbReference type="PANTHER" id="PTHR24408:SF61">
    <property type="entry name" value="E3 SUMO-PROTEIN LIGASE ZNF451"/>
    <property type="match status" value="1"/>
</dbReference>
<dbReference type="PANTHER" id="PTHR24408">
    <property type="entry name" value="ZINC FINGER PROTEIN"/>
    <property type="match status" value="1"/>
</dbReference>
<dbReference type="Pfam" id="PF18479">
    <property type="entry name" value="PIN_11"/>
    <property type="match status" value="1"/>
</dbReference>
<dbReference type="Pfam" id="PF23108">
    <property type="entry name" value="Zf-C2H2_ZNF451"/>
    <property type="match status" value="1"/>
</dbReference>
<dbReference type="Pfam" id="PF23101">
    <property type="entry name" value="Zf-C2H2_ZNF451_1st"/>
    <property type="match status" value="1"/>
</dbReference>
<dbReference type="Pfam" id="PF23102">
    <property type="entry name" value="Zf-C2H2_ZNF451_2nd"/>
    <property type="match status" value="1"/>
</dbReference>
<dbReference type="Pfam" id="PF23103">
    <property type="entry name" value="Zf-C2H2_ZNF451_5th"/>
    <property type="match status" value="1"/>
</dbReference>
<dbReference type="Pfam" id="PF23104">
    <property type="entry name" value="Zf-C2H2_ZNF451_6th"/>
    <property type="match status" value="1"/>
</dbReference>
<dbReference type="Pfam" id="PF23107">
    <property type="entry name" value="Zf-C2H2_ZNF451_C"/>
    <property type="match status" value="1"/>
</dbReference>
<dbReference type="SMART" id="SM00355">
    <property type="entry name" value="ZnF_C2H2"/>
    <property type="match status" value="12"/>
</dbReference>
<dbReference type="PROSITE" id="PS00028">
    <property type="entry name" value="ZINC_FINGER_C2H2_1"/>
    <property type="match status" value="9"/>
</dbReference>
<dbReference type="PROSITE" id="PS50157">
    <property type="entry name" value="ZINC_FINGER_C2H2_2"/>
    <property type="match status" value="5"/>
</dbReference>
<name>ZN451_HUMAN</name>
<sequence length="1061" mass="121484">MGDPGSEIIESVPPAGPEASESTTDENEDDIQFVSEGPLRPVLEYIDLVSSDDEEPSTSYTDENIKRKDHIDYQKDKVALTLARLARHVEVEKQQKEEKNRAFREKIDFQHAHGLQELEFIRGHSDTEAARLCVDQWLKMPGLKTGTINCGTKSSFRRGGHTWVSGKPILCPIMHCNKEFDNGHLLLGHLKRFDHSPCDPTITLHGPFFSSFACVVCYKKFVTQQQYRDHLFDKEATDDGHNNNLLPQIIQCFACPNCFLLFSRKEECSKHMSGKNHFHQSFKLGDNKGIAHPISFPSFAKKLLISLCKDVPFQVKCVACHKTLRSHMELTAHFRVHCRNAGPVAVAEKSITQVAEKFILRGYCPDCNQVFVDETSTQNHKQNSGHKVRVINSVEESVLLYCHSSEGNKDPSSDLHLLLDQSKFSSLKRTMSIKESSSLECIAIPKKKMNLKDKSHEGVACVQKEKSVVKTWFCECNQRFPSEDAVEKHVFSANTMGYKCVVCGKVCDDSGVIRLHMSRIHGGAHLNNFLFWCRTCKKELTRKDTIMAHVTEFHNGHRYFYEMDEVEGETLPSSSTTLDNLTANKPSSAITVIDHSPANSSPRGKWQCRICEDMFDSQEYVKQHCMSLASHKFHRYSCAHCRKPFHKIETLYRHCQDEHDNEIKIKYFCGLCDLIFNVEEAFLSHYEEHHSIDYVFVSEKTETSIKTEDDFPVIETSNQLTCGCRESYICKVNRKEDYSRCLQIMLDKGKLWFRCSLCSATAQNLTDMNTHIHQVHKEKSDEEEQQYVIKCGTCTKAFHDPESAQQHFHRKHCFLQKPSVAHFGSEKSNLYKFTASASHTERKLKQAINYSKSLDMEKGVENDLSYQNIEEEIVELPDLDYLRTMTHIVFVDFDNWSNFFGHLPGHLNQGTFIWGFQGGNTNWKPPLNCKIYNYLNRIGCFFLHPRCSKRKDAADFAICMHAGRLDEQLPKQIPFTILSGDQGFLELENQFKKTQRPAHILNPHHLEGDMMCALLNSISDTTKECDSDDNMGAKNTSIGEEFISTEDVELEEAIRRSLEEM</sequence>
<accession>Q9Y4E5</accession>
<accession>Q5VVE9</accession>
<accession>Q5VVF1</accession>
<accession>Q86YE4</accession>
<accession>Q8N380</accession>
<accession>Q8TD15</accession>
<accession>Q9C0G1</accession>
<accession>Q9NQM1</accession>
<feature type="chain" id="PRO_0000047598" description="E3 SUMO-protein ligase ZNF451">
    <location>
        <begin position="1"/>
        <end position="1061"/>
    </location>
</feature>
<feature type="zinc finger region" description="C2H2-type 1" evidence="2">
    <location>
        <begin position="169"/>
        <end position="195"/>
    </location>
</feature>
<feature type="zinc finger region" description="C2H2-type 2" evidence="2">
    <location>
        <begin position="253"/>
        <end position="277"/>
    </location>
</feature>
<feature type="zinc finger region" description="C2H2-type 3" evidence="2">
    <location>
        <begin position="315"/>
        <end position="337"/>
    </location>
</feature>
<feature type="zinc finger region" description="C2H2-type 4" evidence="2">
    <location>
        <begin position="362"/>
        <end position="386"/>
    </location>
</feature>
<feature type="zinc finger region" description="C2H2-type 5" evidence="2">
    <location>
        <begin position="498"/>
        <end position="521"/>
    </location>
</feature>
<feature type="zinc finger region" description="C2H2-type 6" evidence="2">
    <location>
        <begin position="531"/>
        <end position="554"/>
    </location>
</feature>
<feature type="zinc finger region" description="C2H2-type 7; atypical" evidence="2">
    <location>
        <begin position="606"/>
        <end position="631"/>
    </location>
</feature>
<feature type="zinc finger region" description="C2H2-type 8" evidence="2">
    <location>
        <begin position="636"/>
        <end position="659"/>
    </location>
</feature>
<feature type="zinc finger region" description="C2H2-type 9" evidence="2">
    <location>
        <begin position="667"/>
        <end position="690"/>
    </location>
</feature>
<feature type="zinc finger region" description="C2H2-type 10" evidence="2">
    <location>
        <begin position="753"/>
        <end position="776"/>
    </location>
</feature>
<feature type="zinc finger region" description="C2H2-type 11" evidence="2">
    <location>
        <begin position="789"/>
        <end position="812"/>
    </location>
</feature>
<feature type="region of interest" description="Important for interaction with SUMO1 and SUMO2" evidence="4">
    <location>
        <begin position="1"/>
        <end position="344"/>
    </location>
</feature>
<feature type="region of interest" description="Sufficient for E3 SUMO-protein ligase activity" evidence="6">
    <location>
        <begin position="1"/>
        <end position="246"/>
    </location>
</feature>
<feature type="region of interest" description="Disordered" evidence="3">
    <location>
        <begin position="1"/>
        <end position="38"/>
    </location>
</feature>
<feature type="region of interest" description="Interaction with SUMO2 1" evidence="7">
    <location>
        <begin position="30"/>
        <end position="37"/>
    </location>
</feature>
<feature type="region of interest" description="Interaction with SUMO2 2" evidence="7">
    <location>
        <begin position="42"/>
        <end position="50"/>
    </location>
</feature>
<feature type="region of interest" description="Important for interaction with SMAD4" evidence="5">
    <location>
        <begin position="168"/>
        <end position="525"/>
    </location>
</feature>
<feature type="region of interest" description="Important for ubiquitin binding" evidence="4">
    <location>
        <begin position="1050"/>
        <end position="1061"/>
    </location>
</feature>
<feature type="short sequence motif" description="PLRP" evidence="13">
    <location>
        <begin position="38"/>
        <end position="41"/>
    </location>
</feature>
<feature type="modified residue" description="Phosphoserine" evidence="15">
    <location>
        <position position="155"/>
    </location>
</feature>
<feature type="modified residue" description="Omega-N-methylarginine" evidence="16">
    <location>
        <position position="158"/>
    </location>
</feature>
<feature type="modified residue" description="Phosphoserine" evidence="15">
    <location>
        <position position="432"/>
    </location>
</feature>
<feature type="cross-link" description="Glycyl lysine isopeptide (Lys-Gly) (interchain with G-Cter in SUMO2)" evidence="18 21">
    <location>
        <position position="75"/>
    </location>
</feature>
<feature type="cross-link" description="Glycyl lysine isopeptide (Lys-Gly) (interchain with G-Cter in SUMO2)" evidence="18 21">
    <location>
        <position position="77"/>
    </location>
</feature>
<feature type="cross-link" description="Glycyl lysine isopeptide (Lys-Gly) (interchain with G-Cter in SUMO2)" evidence="18 21">
    <location>
        <position position="106"/>
    </location>
</feature>
<feature type="cross-link" description="Glycyl lysine isopeptide (Lys-Gly) (interchain with G-Cter in SUMO2)" evidence="20 21">
    <location>
        <position position="139"/>
    </location>
</feature>
<feature type="cross-link" description="Glycyl lysine isopeptide (Lys-Gly) (interchain with G-Cter in SUMO2)" evidence="21">
    <location>
        <position position="144"/>
    </location>
</feature>
<feature type="cross-link" description="Glycyl lysine isopeptide (Lys-Gly) (interchain with G-Cter in SUMO2)" evidence="20 21">
    <location>
        <position position="153"/>
    </location>
</feature>
<feature type="cross-link" description="Glycyl lysine isopeptide (Lys-Gly) (interchain with G-Cter in SUMO2)" evidence="21">
    <location>
        <position position="167"/>
    </location>
</feature>
<feature type="cross-link" description="Glycyl lysine isopeptide (Lys-Gly) (interchain with G-Cter in SUMO2)" evidence="21">
    <location>
        <position position="270"/>
    </location>
</feature>
<feature type="cross-link" description="Glycyl lysine isopeptide (Lys-Gly) (interchain with G-Cter in SUMO2)" evidence="21">
    <location>
        <position position="275"/>
    </location>
</feature>
<feature type="cross-link" description="Glycyl lysine isopeptide (Lys-Gly) (interchain with G-Cter in SUMO2)" evidence="21">
    <location>
        <position position="283"/>
    </location>
</feature>
<feature type="cross-link" description="Glycyl lysine isopeptide (Lys-Gly) (interchain with G-Cter in SUMO2)" evidence="18 19 20 21">
    <location>
        <position position="288"/>
    </location>
</feature>
<feature type="cross-link" description="Glycyl lysine isopeptide (Lys-Gly) (interchain with G-Cter in SUMO2)" evidence="21">
    <location>
        <position position="301"/>
    </location>
</feature>
<feature type="cross-link" description="Glycyl lysine isopeptide (Lys-Gly) (interchain with G-Cter in SUMO2)" evidence="21">
    <location>
        <position position="309"/>
    </location>
</feature>
<feature type="cross-link" description="Glycyl lysine isopeptide (Lys-Gly) (interchain with G-Cter in SUMO2)" evidence="21">
    <location>
        <position position="357"/>
    </location>
</feature>
<feature type="cross-link" description="Glycyl lysine isopeptide (Lys-Gly) (interchain with G-Cter in SUMO2)" evidence="18 20 21">
    <location>
        <position position="423"/>
    </location>
</feature>
<feature type="cross-link" description="Glycyl lysine isopeptide (Lys-Gly) (interchain with G-Cter in SUMO2)" evidence="18 19 20 21">
    <location>
        <position position="434"/>
    </location>
</feature>
<feature type="cross-link" description="Glycyl lysine isopeptide (Lys-Gly) (interchain with G-Cter in SUMO2)" evidence="21">
    <location>
        <position position="446"/>
    </location>
</feature>
<feature type="cross-link" description="Glycyl lysine isopeptide (Lys-Gly) (interchain with G-Cter in SUMO2)" evidence="21">
    <location>
        <position position="452"/>
    </location>
</feature>
<feature type="cross-link" description="Glycyl lysine isopeptide (Lys-Gly) (interchain with G-Cter in SUMO2)" evidence="21">
    <location>
        <position position="454"/>
    </location>
</feature>
<feature type="cross-link" description="Glycyl lysine isopeptide (Lys-Gly) (interchain with G-Cter in SUMO2)" evidence="18 21">
    <location>
        <position position="464"/>
    </location>
</feature>
<feature type="cross-link" description="Glycyl lysine isopeptide (Lys-Gly) (interchain with G-Cter in SUMO2)" evidence="21">
    <location>
        <position position="543"/>
    </location>
</feature>
<feature type="cross-link" description="Glycyl lysine isopeptide (Lys-Gly) (interchain with G-Cter in SUMO2)" evidence="21">
    <location>
        <position position="585"/>
    </location>
</feature>
<feature type="cross-link" description="Glycyl lysine isopeptide (Lys-Gly) (interchain with G-Cter in SUMO2)" evidence="21">
    <location>
        <position position="632"/>
    </location>
</feature>
<feature type="cross-link" description="Glycyl lysine isopeptide (Lys-Gly) (interchain with G-Cter in SUMO2)" evidence="21">
    <location>
        <position position="647"/>
    </location>
</feature>
<feature type="cross-link" description="Glycyl lysine isopeptide (Lys-Gly) (interchain with G-Cter in SUMO2)" evidence="19 21">
    <location>
        <position position="664"/>
    </location>
</feature>
<feature type="cross-link" description="Glycyl lysine isopeptide (Lys-Gly) (interchain with G-Cter in SUMO1); alternate" evidence="17">
    <location>
        <position position="706"/>
    </location>
</feature>
<feature type="cross-link" description="Glycyl lysine isopeptide (Lys-Gly) (interchain with G-Cter in SUMO2); alternate" evidence="17 18 20 21">
    <location>
        <position position="706"/>
    </location>
</feature>
<feature type="cross-link" description="Glycyl lysine isopeptide (Lys-Gly) (interchain with G-Cter in SUMO2)" evidence="21">
    <location>
        <position position="731"/>
    </location>
</feature>
<feature type="cross-link" description="Glycyl lysine isopeptide (Lys-Gly) (interchain with G-Cter in SUMO2)" evidence="21">
    <location>
        <position position="748"/>
    </location>
</feature>
<feature type="cross-link" description="Glycyl lysine isopeptide (Lys-Gly) (interchain with G-Cter in SUMO2)" evidence="21">
    <location>
        <position position="777"/>
    </location>
</feature>
<feature type="cross-link" description="Glycyl lysine isopeptide (Lys-Gly) (interchain with G-Cter in SUMO2)" evidence="18 19 20 21">
    <location>
        <position position="779"/>
    </location>
</feature>
<feature type="cross-link" description="Glycyl lysine isopeptide (Lys-Gly) (interchain with G-Cter in SUMO2)" evidence="21">
    <location>
        <position position="790"/>
    </location>
</feature>
<feature type="cross-link" description="Glycyl lysine isopeptide (Lys-Gly) (interchain with G-Cter in SUMO2)" evidence="18 19 20 21">
    <location>
        <position position="817"/>
    </location>
</feature>
<feature type="cross-link" description="Glycyl lysine isopeptide (Lys-Gly) (interchain with G-Cter in SUMO2)" evidence="18 19 20 21">
    <location>
        <position position="827"/>
    </location>
</feature>
<feature type="cross-link" description="Glycyl lysine isopeptide (Lys-Gly) (interchain with G-Cter in SUMO2)" evidence="18 19 20 21">
    <location>
        <position position="832"/>
    </location>
</feature>
<feature type="cross-link" description="Glycyl lysine isopeptide (Lys-Gly) (interchain with G-Cter in SUMO2)" evidence="18 21">
    <location>
        <position position="843"/>
    </location>
</feature>
<feature type="cross-link" description="Glycyl lysine isopeptide (Lys-Gly) (interchain with G-Cter in SUMO2)" evidence="18 19 20 21">
    <location>
        <position position="845"/>
    </location>
</feature>
<feature type="cross-link" description="Glycyl lysine isopeptide (Lys-Gly) (interchain with G-Cter in SUMO2)" evidence="20 21">
    <location>
        <position position="852"/>
    </location>
</feature>
<feature type="cross-link" description="Glycyl lysine isopeptide (Lys-Gly) (interchain with G-Cter in SUMO2)" evidence="21">
    <location>
        <position position="951"/>
    </location>
</feature>
<feature type="cross-link" description="Glycyl lysine isopeptide (Lys-Gly) (interchain with G-Cter in SUMO2)" evidence="21">
    <location>
        <position position="992"/>
    </location>
</feature>
<feature type="cross-link" description="Glycyl lysine isopeptide (Lys-Gly) (interchain with G-Cter in SUMO2)" evidence="20 21">
    <location>
        <position position="993"/>
    </location>
</feature>
<feature type="splice variant" id="VSP_035312" description="In isoform 3." evidence="9 10">
    <original>ENIKRKDHIDYQKDKVALTLARLARHVEVEKQQKEEKNRAFREKIDFQHAHGLQELEFIRGHSDTEAARLCVDQWLKMPGLKTGTINCGTKSSFRRGGHTWVSGKPILCPIMHCNKEFDNGHLLLGHLKRFDHSPCDPTITLHGPFFSSFACVVCYKKFVTQQQYRDHLFDKEATDDGHNNNLLPQIIQCFACPNCFLLFSRKEECSKHMSGKNHFHQSFKLGDNKGIAHPISFPSFAKKLLISLCKDVPFQVKCVACHKTLRSHMELTAHFRVHCRNAGPVAVAEKSITQVAEKFILRGYCPDCNQVFVDETSTQNHKQNSGHKVRVINSVEESVLLYCHSSEGNKDPSSDLHLLLDQSKFSSLKRTMSIKESSSLECIAIPKKKMNLKDKSHEGVACVQKEKSVVKTWFCECNQRFPSEDAVEKHVFSANTMGYKCVVCGKVCDDSGVIRLHMSRIHGGAHLNNFLFWCRTCKKELTRKDTIMAHVTEFHNGHRYFYEMDEVEGETLPSSSTTLDNLTANKPSSAITVIDHSPANSSPRGKWQCRICEDMFDSQEYVKQHCMSLASHKFHRYSCAHCRKPFHKIETLYRHCQDEHDNEIKIKYFCGLCDLIFNVEEAFLSHYEEHHSIDYVFVSEKTETSIKTEDDFPVIETSNQLTCGCRESYICKVNRKEDYSRCLQIMLDKGKLWFRCSLCSATAQNLTDMNTHIHQVHKEKSDEEEQQYVIKCGTCTKAFHDPESAQQHFHRKHCFLQKPSVAHFGSEKSNLYKFTASASHTERKLKQAINYSKSLDMEKGVENDLSYQNIEEEIVELPDLDYLRTMTHIVFVDFDNWSNFFGHLPGHLNQGTFIWGFQGGNTNWKPPLNCKIYNYLNRIGCFFLHPRCSKRKDAADFAICMHAGRLDEQLPKQIPFTILSGDQGFLELENQFKKTQRPAHILNPHHLEGDMMCALLNSISDTTKECDSDDNMGAKNTSIGEEFISTEDVELEEAIRRSLEEM</original>
    <variation>RMPESKVPSSENHRPEMCSSCNVPLPIGDSSSFSGSCSSSPERIVSQTSSVENPLENQKNDQNNSDTKISETETLKSSQNFQTLPSSPLLVPQESLASSEVKENLRIDSSSASQHGRDAILYLQTQVAEMSRVIRDLQSRSCFRFHHSRPSENSSVPWDISTSKEENLSTVEEETDYKSPSADDKGQPSDPSQSSFTGLLKRMEQRGVIKRVTLQSEAESCEGKPDCVTSKKRLVPPLHPLLRIATTEVFKDPADCHPSSFMGHRVYPVAKDTSPFQPNPPAEGPIVEALEHSKRGNTTSPLDSTSKEMEVMGCRFYHAASIAARAASYMAYMTQYQRKLWEDMEDLVHDPEFDRGKARCIISDGMDAGLWQLCTTRDIMDSVVRVMAMAIDYRRQAWLRLTSLTKKTQEKISHLPFDGTSLFGQDVKAVVAEDNNIKENDYKDHKYYNQHRYFYSHDQKAHYHNRGYSKGDWYKPRNHPYRYRKKGDSPERHGYKN</variation>
    <location>
        <begin position="63"/>
        <end position="1061"/>
    </location>
</feature>
<feature type="splice variant" id="VSP_008624" description="In isoform 2." evidence="12">
    <location>
        <begin position="870"/>
        <end position="917"/>
    </location>
</feature>
<feature type="mutagenesis site" description="Nearly abolishes E3 SUMO-protein ligase activity (in vitro)." evidence="6">
    <original>IQFV</original>
    <variation>AQAA</variation>
    <location>
        <begin position="31"/>
        <end position="34"/>
    </location>
</feature>
<feature type="mutagenesis site" description="Nearly abolishes E3 SUMO-protein ligase activity (in vitro)." evidence="6">
    <original>G</original>
    <variation>GGSGG</variation>
    <location>
        <position position="37"/>
    </location>
</feature>
<feature type="mutagenesis site" description="Reduces E3 SUMO-protein ligase activity by 97% (in vitro)." evidence="7">
    <original>PLRP</original>
    <variation>ALRA</variation>
    <location>
        <begin position="38"/>
        <end position="41"/>
    </location>
</feature>
<feature type="mutagenesis site" description="Nearly abolishes E3 SUMO-protein ligase activity (in vitro)." evidence="6">
    <original>PLRP</original>
    <variation>GLRG</variation>
    <location>
        <begin position="38"/>
        <end position="41"/>
    </location>
</feature>
<feature type="mutagenesis site" description="Nearly abolishes E3 SUMO-protein ligase activity (in vitro)." evidence="6">
    <original>L</original>
    <variation>LGSGG</variation>
    <location>
        <position position="39"/>
    </location>
</feature>
<feature type="mutagenesis site" description="Reduces E3 SUMO-protein ligase activity by 96% (in vitro)." evidence="7">
    <original>R</original>
    <variation>A</variation>
    <location>
        <position position="40"/>
    </location>
</feature>
<feature type="mutagenesis site" description="Nearly abolishes E3 SUMO-protein ligase activity (in vitro)." evidence="6">
    <original>IDLV</original>
    <variation>ADAA</variation>
    <location>
        <begin position="46"/>
        <end position="49"/>
    </location>
</feature>
<feature type="mutagenesis site" description="Impairs interaction with SUMO1. No effect on negative regulation of SMAD4-mediated transcription activation." evidence="4 5">
    <original>LV</original>
    <variation>AA</variation>
    <location>
        <begin position="48"/>
        <end position="49"/>
    </location>
</feature>
<feature type="mutagenesis site" description="Mildly reduces E3 SUMO-protein ligase activity." evidence="6">
    <original>G</original>
    <variation>E</variation>
    <location>
        <position position="188"/>
    </location>
</feature>
<feature type="mutagenesis site" description="Mildly reduces E3 SUMO-protein ligase activity." evidence="6">
    <original>R</original>
    <variation>E</variation>
    <location>
        <position position="192"/>
    </location>
</feature>
<feature type="mutagenesis site" description="No effect on negative regulation of SMAD4-mediated transcription activation." evidence="5">
    <original>K</original>
    <variation>R</variation>
    <location>
        <position position="706"/>
    </location>
</feature>
<feature type="sequence conflict" description="In Ref. 1; AAL17975." evidence="13" ref="1">
    <original>I</original>
    <variation>T</variation>
    <location>
        <position position="169"/>
    </location>
</feature>
<feature type="strand" evidence="22">
    <location>
        <begin position="32"/>
        <end position="40"/>
    </location>
</feature>
<feature type="strand" evidence="22">
    <location>
        <begin position="42"/>
        <end position="47"/>
    </location>
</feature>
<feature type="cross-link" description="Glycyl lysine isopeptide (Lys-Gly) (interchain with G-Cter in SUMO2)" evidence="21">
    <location sequence="Q9Y4E5-4">
        <position position="121"/>
    </location>
</feature>
<feature type="cross-link" description="Glycyl lysine isopeptide (Lys-Gly) (interchain with G-Cter in SUMO2)" evidence="18 19 20 21">
    <location sequence="Q9Y4E5-4">
        <position position="130"/>
    </location>
</feature>
<feature type="cross-link" description="Glycyl lysine isopeptide (Lys-Gly) (interchain with G-Cter in SUMO2)" evidence="21">
    <location sequence="Q9Y4E5-4">
        <position position="138"/>
    </location>
</feature>
<feature type="cross-link" description="Glycyl lysine isopeptide (Lys-Gly) (interchain with G-Cter in SUMO2)" evidence="18 21">
    <location sequence="Q9Y4E5-4">
        <position position="164"/>
    </location>
</feature>
<feature type="cross-link" description="Glycyl lysine isopeptide (Lys-Gly) (interchain with G-Cter in SUMO2)" evidence="21">
    <location sequence="Q9Y4E5-4">
        <position position="226"/>
    </location>
</feature>
<feature type="cross-link" description="Glycyl lysine isopeptide (Lys-Gly) (interchain with G-Cter in SUMO2)" evidence="21">
    <location sequence="Q9Y4E5-4">
        <position position="240"/>
    </location>
</feature>
<feature type="cross-link" description="Glycyl lysine isopeptide (Lys-Gly) (interchain with G-Cter in SUMO2)" evidence="21">
    <location sequence="Q9Y4E5-4">
        <position position="247"/>
    </location>
</feature>
<feature type="cross-link" description="Glycyl lysine isopeptide (Lys-Gly) (interchain with G-Cter in SUMO2)" evidence="21">
    <location sequence="Q9Y4E5-4">
        <position position="263"/>
    </location>
</feature>
<feature type="cross-link" description="Glycyl lysine isopeptide (Lys-Gly) (interchain with G-Cter in SUMO2)" evidence="21">
    <location sequence="Q9Y4E5-4">
        <position position="286"/>
    </location>
</feature>
<feature type="cross-link" description="Glycyl lysine isopeptide (Lys-Gly) (interchain with G-Cter in SUMO2)" evidence="21">
    <location sequence="Q9Y4E5-4">
        <position position="293"/>
    </location>
</feature>
<feature type="cross-link" description="Glycyl lysine isopeptide (Lys-Gly) (interchain with G-Cter in SUMO2)" evidence="21">
    <location sequence="Q9Y4E5-4">
        <position position="473"/>
    </location>
</feature>
<feature type="cross-link" description="Glycyl lysine isopeptide (Lys-Gly) (interchain with G-Cter in SUMO2)" evidence="18 19 20 21">
    <location sequence="Q9Y4E5-4">
        <position position="490"/>
    </location>
</feature>
<feature type="cross-link" description="Glycyl lysine isopeptide (Lys-Gly) (interchain with G-Cter in SUMO2)" evidence="21">
    <location sequence="Q9Y4E5-4">
        <position position="500"/>
    </location>
</feature>
<feature type="cross-link" description="Glycyl lysine isopeptide (Lys-Gly) (interchain with G-Cter in SUMO2)" evidence="21">
    <location sequence="Q9Y4E5-4">
        <position position="505"/>
    </location>
</feature>
<feature type="cross-link" description="Glycyl lysine isopeptide (Lys-Gly) (interchain with G-Cter in SUMO2)" evidence="21">
    <location sequence="Q9Y4E5-4">
        <position position="508"/>
    </location>
</feature>
<feature type="cross-link" description="Glycyl lysine isopeptide (Lys-Gly) (interchain with G-Cter in SUMO2)" evidence="19 21">
    <location sequence="Q9Y4E5-4">
        <position position="522"/>
    </location>
</feature>
<feature type="cross-link" description="Glycyl lysine isopeptide (Lys-Gly) (interchain with G-Cter in SUMO2)" evidence="21">
    <location sequence="Q9Y4E5-4">
        <position position="532"/>
    </location>
</feature>
<organism>
    <name type="scientific">Homo sapiens</name>
    <name type="common">Human</name>
    <dbReference type="NCBI Taxonomy" id="9606"/>
    <lineage>
        <taxon>Eukaryota</taxon>
        <taxon>Metazoa</taxon>
        <taxon>Chordata</taxon>
        <taxon>Craniata</taxon>
        <taxon>Vertebrata</taxon>
        <taxon>Euteleostomi</taxon>
        <taxon>Mammalia</taxon>
        <taxon>Eutheria</taxon>
        <taxon>Euarchontoglires</taxon>
        <taxon>Primates</taxon>
        <taxon>Haplorrhini</taxon>
        <taxon>Catarrhini</taxon>
        <taxon>Hominidae</taxon>
        <taxon>Homo</taxon>
    </lineage>
</organism>
<reference key="1">
    <citation type="submission" date="2001-09" db="EMBL/GenBank/DDBJ databases">
        <title>Isolation of a novel coactivator for steroid receptors that alters the intrinsic activity of the estrogen receptor alpha liganded with SERMs.</title>
        <authorList>
            <person name="Heldens I.M."/>
            <person name="Dechering K.J."/>
        </authorList>
    </citation>
    <scope>NUCLEOTIDE SEQUENCE [MRNA] (ISOFORM 2)</scope>
</reference>
<reference key="2">
    <citation type="journal article" date="1998" name="DNA Res.">
        <title>Prediction of the coding sequences of unidentified human genes. IX. The complete sequences of 100 new cDNA clones from brain which can code for large proteins in vitro.</title>
        <authorList>
            <person name="Nagase T."/>
            <person name="Ishikawa K."/>
            <person name="Miyajima N."/>
            <person name="Tanaka A."/>
            <person name="Kotani H."/>
            <person name="Nomura N."/>
            <person name="Ohara O."/>
        </authorList>
    </citation>
    <scope>NUCLEOTIDE SEQUENCE [LARGE SCALE MRNA] (ISOFORM 1)</scope>
    <source>
        <tissue>Brain</tissue>
    </source>
</reference>
<reference key="3">
    <citation type="journal article" date="2000" name="DNA Res.">
        <title>Prediction of the coding sequences of unidentified human genes. XIX. The complete sequences of 100 new cDNA clones from brain which code for large proteins in vitro.</title>
        <authorList>
            <person name="Nagase T."/>
            <person name="Kikuno R."/>
            <person name="Hattori A."/>
            <person name="Kondo Y."/>
            <person name="Okumura K."/>
            <person name="Ohara O."/>
        </authorList>
    </citation>
    <scope>NUCLEOTIDE SEQUENCE [LARGE SCALE MRNA] OF 63-1061 (ISOFORM 3)</scope>
    <source>
        <tissue>Brain</tissue>
    </source>
</reference>
<reference key="4">
    <citation type="journal article" date="2003" name="Nature">
        <title>The DNA sequence and analysis of human chromosome 6.</title>
        <authorList>
            <person name="Mungall A.J."/>
            <person name="Palmer S.A."/>
            <person name="Sims S.K."/>
            <person name="Edwards C.A."/>
            <person name="Ashurst J.L."/>
            <person name="Wilming L."/>
            <person name="Jones M.C."/>
            <person name="Horton R."/>
            <person name="Hunt S.E."/>
            <person name="Scott C.E."/>
            <person name="Gilbert J.G.R."/>
            <person name="Clamp M.E."/>
            <person name="Bethel G."/>
            <person name="Milne S."/>
            <person name="Ainscough R."/>
            <person name="Almeida J.P."/>
            <person name="Ambrose K.D."/>
            <person name="Andrews T.D."/>
            <person name="Ashwell R.I.S."/>
            <person name="Babbage A.K."/>
            <person name="Bagguley C.L."/>
            <person name="Bailey J."/>
            <person name="Banerjee R."/>
            <person name="Barker D.J."/>
            <person name="Barlow K.F."/>
            <person name="Bates K."/>
            <person name="Beare D.M."/>
            <person name="Beasley H."/>
            <person name="Beasley O."/>
            <person name="Bird C.P."/>
            <person name="Blakey S.E."/>
            <person name="Bray-Allen S."/>
            <person name="Brook J."/>
            <person name="Brown A.J."/>
            <person name="Brown J.Y."/>
            <person name="Burford D.C."/>
            <person name="Burrill W."/>
            <person name="Burton J."/>
            <person name="Carder C."/>
            <person name="Carter N.P."/>
            <person name="Chapman J.C."/>
            <person name="Clark S.Y."/>
            <person name="Clark G."/>
            <person name="Clee C.M."/>
            <person name="Clegg S."/>
            <person name="Cobley V."/>
            <person name="Collier R.E."/>
            <person name="Collins J.E."/>
            <person name="Colman L.K."/>
            <person name="Corby N.R."/>
            <person name="Coville G.J."/>
            <person name="Culley K.M."/>
            <person name="Dhami P."/>
            <person name="Davies J."/>
            <person name="Dunn M."/>
            <person name="Earthrowl M.E."/>
            <person name="Ellington A.E."/>
            <person name="Evans K.A."/>
            <person name="Faulkner L."/>
            <person name="Francis M.D."/>
            <person name="Frankish A."/>
            <person name="Frankland J."/>
            <person name="French L."/>
            <person name="Garner P."/>
            <person name="Garnett J."/>
            <person name="Ghori M.J."/>
            <person name="Gilby L.M."/>
            <person name="Gillson C.J."/>
            <person name="Glithero R.J."/>
            <person name="Grafham D.V."/>
            <person name="Grant M."/>
            <person name="Gribble S."/>
            <person name="Griffiths C."/>
            <person name="Griffiths M.N.D."/>
            <person name="Hall R."/>
            <person name="Halls K.S."/>
            <person name="Hammond S."/>
            <person name="Harley J.L."/>
            <person name="Hart E.A."/>
            <person name="Heath P.D."/>
            <person name="Heathcott R."/>
            <person name="Holmes S.J."/>
            <person name="Howden P.J."/>
            <person name="Howe K.L."/>
            <person name="Howell G.R."/>
            <person name="Huckle E."/>
            <person name="Humphray S.J."/>
            <person name="Humphries M.D."/>
            <person name="Hunt A.R."/>
            <person name="Johnson C.M."/>
            <person name="Joy A.A."/>
            <person name="Kay M."/>
            <person name="Keenan S.J."/>
            <person name="Kimberley A.M."/>
            <person name="King A."/>
            <person name="Laird G.K."/>
            <person name="Langford C."/>
            <person name="Lawlor S."/>
            <person name="Leongamornlert D.A."/>
            <person name="Leversha M."/>
            <person name="Lloyd C.R."/>
            <person name="Lloyd D.M."/>
            <person name="Loveland J.E."/>
            <person name="Lovell J."/>
            <person name="Martin S."/>
            <person name="Mashreghi-Mohammadi M."/>
            <person name="Maslen G.L."/>
            <person name="Matthews L."/>
            <person name="McCann O.T."/>
            <person name="McLaren S.J."/>
            <person name="McLay K."/>
            <person name="McMurray A."/>
            <person name="Moore M.J.F."/>
            <person name="Mullikin J.C."/>
            <person name="Niblett D."/>
            <person name="Nickerson T."/>
            <person name="Novik K.L."/>
            <person name="Oliver K."/>
            <person name="Overton-Larty E.K."/>
            <person name="Parker A."/>
            <person name="Patel R."/>
            <person name="Pearce A.V."/>
            <person name="Peck A.I."/>
            <person name="Phillimore B.J.C.T."/>
            <person name="Phillips S."/>
            <person name="Plumb R.W."/>
            <person name="Porter K.M."/>
            <person name="Ramsey Y."/>
            <person name="Ranby S.A."/>
            <person name="Rice C.M."/>
            <person name="Ross M.T."/>
            <person name="Searle S.M."/>
            <person name="Sehra H.K."/>
            <person name="Sheridan E."/>
            <person name="Skuce C.D."/>
            <person name="Smith S."/>
            <person name="Smith M."/>
            <person name="Spraggon L."/>
            <person name="Squares S.L."/>
            <person name="Steward C.A."/>
            <person name="Sycamore N."/>
            <person name="Tamlyn-Hall G."/>
            <person name="Tester J."/>
            <person name="Theaker A.J."/>
            <person name="Thomas D.W."/>
            <person name="Thorpe A."/>
            <person name="Tracey A."/>
            <person name="Tromans A."/>
            <person name="Tubby B."/>
            <person name="Wall M."/>
            <person name="Wallis J.M."/>
            <person name="West A.P."/>
            <person name="White S.S."/>
            <person name="Whitehead S.L."/>
            <person name="Whittaker H."/>
            <person name="Wild A."/>
            <person name="Willey D.J."/>
            <person name="Wilmer T.E."/>
            <person name="Wood J.M."/>
            <person name="Wray P.W."/>
            <person name="Wyatt J.C."/>
            <person name="Young L."/>
            <person name="Younger R.M."/>
            <person name="Bentley D.R."/>
            <person name="Coulson A."/>
            <person name="Durbin R.M."/>
            <person name="Hubbard T."/>
            <person name="Sulston J.E."/>
            <person name="Dunham I."/>
            <person name="Rogers J."/>
            <person name="Beck S."/>
        </authorList>
    </citation>
    <scope>NUCLEOTIDE SEQUENCE [LARGE SCALE GENOMIC DNA]</scope>
</reference>
<reference key="5">
    <citation type="journal article" date="2004" name="Genome Res.">
        <title>The status, quality, and expansion of the NIH full-length cDNA project: the Mammalian Gene Collection (MGC).</title>
        <authorList>
            <consortium name="The MGC Project Team"/>
        </authorList>
    </citation>
    <scope>NUCLEOTIDE SEQUENCE [LARGE SCALE MRNA] OF 1-918 (ISOFORM 1)</scope>
    <scope>NUCLEOTIDE SEQUENCE [LARGE SCALE MRNA] OF 36-1061 (ISOFORM 3)</scope>
    <source>
        <tissue>Brain</tissue>
        <tissue>Testis</tissue>
    </source>
</reference>
<reference key="6">
    <citation type="journal article" date="2008" name="J. Mol. Biol.">
        <title>ZNF451 is a novel PML body- and SUMO-associated transcriptional coregulator.</title>
        <authorList>
            <person name="Karvonen U."/>
            <person name="Jaeaeskelaeinen T."/>
            <person name="Rytinki M."/>
            <person name="Kaikkonen S."/>
            <person name="Palvimo J.J."/>
        </authorList>
    </citation>
    <scope>FUNCTION</scope>
    <scope>SUBCELLULAR LOCATION</scope>
    <scope>INTERACTION WITH SUMO1; SUMO2 AND UBIQUITIN</scope>
    <scope>MUTAGENESIS OF 48-LEU-VAL-49</scope>
</reference>
<reference key="7">
    <citation type="journal article" date="2009" name="Sci. Signal.">
        <title>Quantitative phosphoproteomic analysis of T cell receptor signaling reveals system-wide modulation of protein-protein interactions.</title>
        <authorList>
            <person name="Mayya V."/>
            <person name="Lundgren D.H."/>
            <person name="Hwang S.-I."/>
            <person name="Rezaul K."/>
            <person name="Wu L."/>
            <person name="Eng J.K."/>
            <person name="Rodionov V."/>
            <person name="Han D.K."/>
        </authorList>
    </citation>
    <scope>IDENTIFICATION BY MASS SPECTROMETRY [LARGE SCALE ANALYSIS]</scope>
    <source>
        <tissue>Leukemic T-cell</tissue>
    </source>
</reference>
<reference key="8">
    <citation type="journal article" date="2013" name="J. Proteome Res.">
        <title>Toward a comprehensive characterization of a human cancer cell phosphoproteome.</title>
        <authorList>
            <person name="Zhou H."/>
            <person name="Di Palma S."/>
            <person name="Preisinger C."/>
            <person name="Peng M."/>
            <person name="Polat A.N."/>
            <person name="Heck A.J."/>
            <person name="Mohammed S."/>
        </authorList>
    </citation>
    <scope>PHOSPHORYLATION [LARGE SCALE ANALYSIS] AT SER-155 AND SER-432</scope>
    <scope>IDENTIFICATION BY MASS SPECTROMETRY [LARGE SCALE ANALYSIS]</scope>
    <source>
        <tissue>Erythroleukemia</tissue>
    </source>
</reference>
<reference key="9">
    <citation type="journal article" date="2014" name="J. Biol. Chem.">
        <title>Zinc finger protein 451 is a novel Smad corepressor in transforming growth factor-beta signaling.</title>
        <authorList>
            <person name="Feng Y."/>
            <person name="Wu H."/>
            <person name="Xu Y."/>
            <person name="Zhang Z."/>
            <person name="Liu T."/>
            <person name="Lin X."/>
            <person name="Feng X.H."/>
        </authorList>
    </citation>
    <scope>FUNCTION</scope>
    <scope>INTERACTION WITH EP300; SMAD2; SMAD3 AND SMAD4</scope>
    <scope>IDENTIFICATION IN A COMPLEX WITH SMAD2; SMAD3 AND SMAD4</scope>
    <scope>SUBCELLULAR LOCATION</scope>
    <scope>MUTAGENESIS OF 48-LEU-VAL-49 AND LYS-706</scope>
</reference>
<reference key="10">
    <citation type="journal article" date="2014" name="Mol. Cell. Proteomics">
        <title>Immunoaffinity enrichment and mass spectrometry analysis of protein methylation.</title>
        <authorList>
            <person name="Guo A."/>
            <person name="Gu H."/>
            <person name="Zhou J."/>
            <person name="Mulhern D."/>
            <person name="Wang Y."/>
            <person name="Lee K.A."/>
            <person name="Yang V."/>
            <person name="Aguiar M."/>
            <person name="Kornhauser J."/>
            <person name="Jia X."/>
            <person name="Ren J."/>
            <person name="Beausoleil S.A."/>
            <person name="Silva J.C."/>
            <person name="Vemulapalli V."/>
            <person name="Bedford M.T."/>
            <person name="Comb M.J."/>
        </authorList>
    </citation>
    <scope>METHYLATION [LARGE SCALE ANALYSIS] AT ARG-158</scope>
    <scope>IDENTIFICATION BY MASS SPECTROMETRY [LARGE SCALE ANALYSIS]</scope>
    <source>
        <tissue>Colon carcinoma</tissue>
    </source>
</reference>
<reference key="11">
    <citation type="journal article" date="2014" name="Nat. Struct. Mol. Biol.">
        <title>Uncovering global SUMOylation signaling networks in a site-specific manner.</title>
        <authorList>
            <person name="Hendriks I.A."/>
            <person name="D'Souza R.C."/>
            <person name="Yang B."/>
            <person name="Verlaan-de Vries M."/>
            <person name="Mann M."/>
            <person name="Vertegaal A.C."/>
        </authorList>
    </citation>
    <scope>SUMOYLATION [LARGE SCALE ANALYSIS] AT LYS-75; LYS-77; LYS-106; LYS-288; LYS-423; LYS-434; LYS-464; LYS-706; LYS-779; LYS-817; LYS-827; LYS-832; LYS-843 AND LYS-845</scope>
    <scope>SUMOYLATION [LARGE SCALE ANALYSIS] AT LYS-130; LYS-164 AND LYS-490 (ISOFORM 3)</scope>
    <scope>IDENTIFICATION BY MASS SPECTROMETRY [LARGE SCALE ANALYSIS]</scope>
</reference>
<reference key="12">
    <citation type="journal article" date="2014" name="Proc. Natl. Acad. Sci. U.S.A.">
        <title>Mapping of SUMO sites and analysis of SUMOylation changes induced by external stimuli.</title>
        <authorList>
            <person name="Impens F."/>
            <person name="Radoshevich L."/>
            <person name="Cossart P."/>
            <person name="Ribet D."/>
        </authorList>
    </citation>
    <scope>SUMOYLATION [LARGE SCALE ANALYSIS] AT LYS-706</scope>
    <scope>IDENTIFICATION BY MASS SPECTROMETRY [LARGE SCALE ANALYSIS]</scope>
</reference>
<reference key="13">
    <citation type="journal article" date="2015" name="Cell Rep.">
        <title>SUMO-2 orchestrates chromatin modifiers in response to DNA damage.</title>
        <authorList>
            <person name="Hendriks I.A."/>
            <person name="Treffers L.W."/>
            <person name="Verlaan-de Vries M."/>
            <person name="Olsen J.V."/>
            <person name="Vertegaal A.C."/>
        </authorList>
    </citation>
    <scope>SUMOYLATION [LARGE SCALE ANALYSIS] AT LYS-139; LYS-153; LYS-288; LYS-423; LYS-434; LYS-706; LYS-779; LYS-817; LYS-827; LYS-832; LYS-845; LYS-852 AND LYS-993</scope>
    <scope>SUMOYLATION [LARGE SCALE ANALYSIS] AT LYS-130 AND LYS-490 (ISOFORM 3)</scope>
    <scope>IDENTIFICATION BY MASS SPECTROMETRY [LARGE SCALE ANALYSIS]</scope>
</reference>
<reference key="14">
    <citation type="journal article" date="2015" name="Mol. Cell. Proteomics">
        <title>System-wide analysis of SUMOylation dynamics in response to replication stress reveals novel small ubiquitin-like modified target proteins and acceptor lysines relevant for genome stability.</title>
        <authorList>
            <person name="Xiao Z."/>
            <person name="Chang J.G."/>
            <person name="Hendriks I.A."/>
            <person name="Sigurdsson J.O."/>
            <person name="Olsen J.V."/>
            <person name="Vertegaal A.C."/>
        </authorList>
    </citation>
    <scope>SUMOYLATION [LARGE SCALE ANALYSIS] AT LYS-288; LYS-434; LYS-664; LYS-779; LYS-817; LYS-827; LYS-832 AND LYS-845</scope>
    <scope>SUMOYLATION [LARGE SCALE ANALYSIS] AT LYS-130; LYS-490 AND LYS-522 (ISOFORM 3)</scope>
    <scope>IDENTIFICATION BY MASS SPECTROMETRY [LARGE SCALE ANALYSIS]</scope>
</reference>
<reference key="15">
    <citation type="journal article" date="2015" name="Nat. Struct. Mol. Biol.">
        <title>A new vertebrate SUMO enzyme family reveals insights into SUMO-chain assembly.</title>
        <authorList>
            <person name="Eisenhardt N."/>
            <person name="Chaugule V.K."/>
            <person name="Koidl S."/>
            <person name="Droescher M."/>
            <person name="Dogan E."/>
            <person name="Rettich J."/>
            <person name="Sutinen P."/>
            <person name="Imanishi S.Y."/>
            <person name="Hofmann K."/>
            <person name="Palvimo J.J."/>
            <person name="Pichler A."/>
        </authorList>
    </citation>
    <scope>FUNCTION</scope>
    <scope>CATALYTIC ACTIVITY</scope>
    <scope>PATHWAY</scope>
    <scope>INTERACTION WITH UBE2I AND SUMO2</scope>
    <scope>MUTAGENESIS OF 31-ILE--VAL-34; GLY-37; 38-PRO--PRO-41; LEU-39; 46-ILE--VAL-49; GLY-188 AND ARG-192</scope>
    <scope>DOMAIN</scope>
</reference>
<reference key="16">
    <citation type="journal article" date="2017" name="Nat. Struct. Mol. Biol.">
        <title>Site-specific mapping of the human SUMO proteome reveals co-modification with phosphorylation.</title>
        <authorList>
            <person name="Hendriks I.A."/>
            <person name="Lyon D."/>
            <person name="Young C."/>
            <person name="Jensen L.J."/>
            <person name="Vertegaal A.C."/>
            <person name="Nielsen M.L."/>
        </authorList>
    </citation>
    <scope>SUMOYLATION [LARGE SCALE ANALYSIS] AT LYS-75; LYS-77; LYS-106; LYS-139; LYS-144; LYS-153; LYS-167; LYS-270; LYS-275; LYS-283; LYS-288; LYS-301; LYS-309; LYS-357; LYS-423; LYS-434; LYS-446; LYS-452; LYS-454; LYS-464; LYS-543; LYS-585; LYS-632; LYS-647; LYS-664; LYS-706; LYS-731; LYS-748; LYS-777; LYS-779; LYS-790; LYS-817; LYS-827; LYS-832; LYS-843; LYS-845; LYS-852; LYS-951; LYS-992 AND LYS-993</scope>
    <scope>SUMOYLATION [LARGE SCALE ANALYSIS] AT LYS-121; LYS-130; LYS-138; LYS-164; LYS-226; LYS-240; LYS-247; LYS-263; LYS-286; LYS-293; LYS-473; LYS-490; LYS-500; LYS-505; LYS-508; LYS-522 AND LYS-532 (ISOFORM 3)</scope>
    <scope>IDENTIFICATION BY MASS SPECTROMETRY [LARGE SCALE ANALYSIS]</scope>
</reference>
<reference key="17">
    <citation type="journal article" date="2022" name="Elife">
        <title>The Nse5/6-like SIMC1-SLF2 complex localizes SMC5/6 to viral replication centers.</title>
        <authorList>
            <person name="Oravcova M."/>
            <person name="Nie M."/>
            <person name="Zilio N."/>
            <person name="Maeda S."/>
            <person name="Jami-Alahmadi Y."/>
            <person name="Lazzerini-Denchi E."/>
            <person name="Wohlschlegel J.A."/>
            <person name="Ulrich H.D."/>
            <person name="Otomo T."/>
            <person name="Boddy M.N."/>
        </authorList>
    </citation>
    <scope>SUBCELLULAR LOCATION</scope>
    <scope>INTERACTION WITH SIMC1</scope>
</reference>
<reference key="18">
    <citation type="journal article" date="2015" name="Nat. Struct. Mol. Biol.">
        <title>Structural basis for catalytic activation by the human ZNF451 SUMO E3 ligase.</title>
        <authorList>
            <person name="Cappadocia L."/>
            <person name="Pichler A."/>
            <person name="Lima C.D."/>
        </authorList>
    </citation>
    <scope>X-RAY CRYSTALLOGRAPHY (2.40 ANGSTROMS) OF 2-56 IN COMPLEX WITH SUMO2 AND UBE2I</scope>
    <scope>FUNCTION</scope>
    <scope>CATALYTIC ACTIVITY</scope>
    <scope>INTERACTION WITH UBE2I AND SUMO2</scope>
    <scope>SUBUNIT</scope>
    <scope>PATHWAY</scope>
    <scope>DOMAIN</scope>
    <scope>MUTAGENESIS OF 38-PRO--PRO-41 AND ARG-40</scope>
    <scope>SUMOYLATION</scope>
</reference>
<keyword id="KW-0002">3D-structure</keyword>
<keyword id="KW-0025">Alternative splicing</keyword>
<keyword id="KW-1017">Isopeptide bond</keyword>
<keyword id="KW-0479">Metal-binding</keyword>
<keyword id="KW-0488">Methylation</keyword>
<keyword id="KW-0539">Nucleus</keyword>
<keyword id="KW-0597">Phosphoprotein</keyword>
<keyword id="KW-1267">Proteomics identification</keyword>
<keyword id="KW-1185">Reference proteome</keyword>
<keyword id="KW-0677">Repeat</keyword>
<keyword id="KW-0804">Transcription</keyword>
<keyword id="KW-0805">Transcription regulation</keyword>
<keyword id="KW-0808">Transferase</keyword>
<keyword id="KW-0832">Ubl conjugation</keyword>
<keyword id="KW-0833">Ubl conjugation pathway</keyword>
<keyword id="KW-0862">Zinc</keyword>
<keyword id="KW-0863">Zinc-finger</keyword>
<evidence type="ECO:0000250" key="1">
    <source>
        <dbReference type="UniProtKB" id="Q8C0P7"/>
    </source>
</evidence>
<evidence type="ECO:0000255" key="2">
    <source>
        <dbReference type="PROSITE-ProRule" id="PRU00042"/>
    </source>
</evidence>
<evidence type="ECO:0000256" key="3">
    <source>
        <dbReference type="SAM" id="MobiDB-lite"/>
    </source>
</evidence>
<evidence type="ECO:0000269" key="4">
    <source>
    </source>
</evidence>
<evidence type="ECO:0000269" key="5">
    <source>
    </source>
</evidence>
<evidence type="ECO:0000269" key="6">
    <source>
    </source>
</evidence>
<evidence type="ECO:0000269" key="7">
    <source>
    </source>
</evidence>
<evidence type="ECO:0000269" key="8">
    <source>
    </source>
</evidence>
<evidence type="ECO:0000303" key="9">
    <source>
    </source>
</evidence>
<evidence type="ECO:0000303" key="10">
    <source>
    </source>
</evidence>
<evidence type="ECO:0000303" key="11">
    <source>
    </source>
</evidence>
<evidence type="ECO:0000303" key="12">
    <source ref="1"/>
</evidence>
<evidence type="ECO:0000305" key="13"/>
<evidence type="ECO:0000305" key="14">
    <source>
    </source>
</evidence>
<evidence type="ECO:0007744" key="15">
    <source>
    </source>
</evidence>
<evidence type="ECO:0007744" key="16">
    <source>
    </source>
</evidence>
<evidence type="ECO:0007744" key="17">
    <source>
    </source>
</evidence>
<evidence type="ECO:0007744" key="18">
    <source>
    </source>
</evidence>
<evidence type="ECO:0007744" key="19">
    <source>
    </source>
</evidence>
<evidence type="ECO:0007744" key="20">
    <source>
    </source>
</evidence>
<evidence type="ECO:0007744" key="21">
    <source>
    </source>
</evidence>
<evidence type="ECO:0007829" key="22">
    <source>
        <dbReference type="PDB" id="5D2M"/>
    </source>
</evidence>